<accession>Q9VRJ9</accession>
<accession>Q8T9H3</accession>
<organism>
    <name type="scientific">Drosophila melanogaster</name>
    <name type="common">Fruit fly</name>
    <dbReference type="NCBI Taxonomy" id="7227"/>
    <lineage>
        <taxon>Eukaryota</taxon>
        <taxon>Metazoa</taxon>
        <taxon>Ecdysozoa</taxon>
        <taxon>Arthropoda</taxon>
        <taxon>Hexapoda</taxon>
        <taxon>Insecta</taxon>
        <taxon>Pterygota</taxon>
        <taxon>Neoptera</taxon>
        <taxon>Endopterygota</taxon>
        <taxon>Diptera</taxon>
        <taxon>Brachycera</taxon>
        <taxon>Muscomorpha</taxon>
        <taxon>Ephydroidea</taxon>
        <taxon>Drosophilidae</taxon>
        <taxon>Drosophila</taxon>
        <taxon>Sophophora</taxon>
    </lineage>
</organism>
<gene>
    <name evidence="9" type="primary">Yod1</name>
    <name evidence="6" type="synonym">Otu1</name>
    <name evidence="9" type="ORF">CG4603</name>
</gene>
<protein>
    <recommendedName>
        <fullName evidence="8">Ubiquitin thioesterase Otu1</fullName>
        <ecNumber evidence="2">3.4.19.12</ecNumber>
    </recommendedName>
    <alternativeName>
        <fullName evidence="9">Yod1 deubiquitinase</fullName>
    </alternativeName>
</protein>
<sequence length="347" mass="37823">MTGSFSVKLKSKKGQFIVNDLNEHTTLGELKTKIVQATDIEATQLHVLVGYPPKPLDLSQQQEQRALKAVGINSGETLIVEEKAAPAPAAPVPGGTTVEDDEALARRLQAEEEAQLLQETAGGPVAQAADYQLPVAPTESGPNGDFNGILLKKVVPADNSCLFTSIRFVLNGKVDNEGSEMMRHIIAQEVAADPQSYNDAVLGKSNAEYCAWIQKADSWGGAIEVSILSNYYGIEIDVVDIQNAIINRFGEDKNFGLRVFLLFDGIHYDPLYMETSPSAAPATIFPVEELGVYQQAEQLANEAQSSRQYTNVDKFTLRCMQCDVRLVGQVQAQEHAKQTGHKNFGEI</sequence>
<proteinExistence type="evidence at transcript level"/>
<comment type="function">
    <text evidence="1 5">Hydrolase that can remove conjugated ubiquitin from proteins and may therefore play an important regulatory role at the level of protein turnover by preventing degradation (By similarity). Involved in the regulation of DNA damage repair (PubMed:35393473).</text>
</comment>
<comment type="catalytic activity">
    <reaction evidence="2">
        <text>Thiol-dependent hydrolysis of ester, thioester, amide, peptide and isopeptide bonds formed by the C-terminal Gly of ubiquitin (a 76-residue protein attached to proteins as an intracellular targeting signal).</text>
        <dbReference type="EC" id="3.4.19.12"/>
    </reaction>
</comment>
<comment type="disruption phenotype">
    <text evidence="5">When irradiated with X-rays, adults display increased wing and eye abnormalities (PubMed:35393473). Third instar larvae exposed to X-rays do not display any changes in pupation or eclosion (PubMed:35393473). RNAi-mediated knockdown in third instar larvae results in reduced survival in response to UV radiation (PubMed:35393473).</text>
</comment>
<dbReference type="EC" id="3.4.19.12" evidence="2"/>
<dbReference type="EMBL" id="AE014296">
    <property type="protein sequence ID" value="AAF50796.1"/>
    <property type="molecule type" value="Genomic_DNA"/>
</dbReference>
<dbReference type="EMBL" id="AY069295">
    <property type="protein sequence ID" value="AAL39440.1"/>
    <property type="molecule type" value="mRNA"/>
</dbReference>
<dbReference type="RefSeq" id="NP_001261436.1">
    <property type="nucleotide sequence ID" value="NM_001274507.1"/>
</dbReference>
<dbReference type="RefSeq" id="NP_647951.2">
    <property type="nucleotide sequence ID" value="NM_139694.4"/>
</dbReference>
<dbReference type="SMR" id="Q9VRJ9"/>
<dbReference type="BioGRID" id="64071">
    <property type="interactions" value="10"/>
</dbReference>
<dbReference type="FunCoup" id="Q9VRJ9">
    <property type="interactions" value="1159"/>
</dbReference>
<dbReference type="IntAct" id="Q9VRJ9">
    <property type="interactions" value="3"/>
</dbReference>
<dbReference type="STRING" id="7227.FBpp0303184"/>
<dbReference type="MEROPS" id="C85.007"/>
<dbReference type="GlyGen" id="Q9VRJ9">
    <property type="glycosylation" value="1 site"/>
</dbReference>
<dbReference type="PaxDb" id="7227-FBpp0304189"/>
<dbReference type="DNASU" id="38603"/>
<dbReference type="EnsemblMetazoa" id="FBtr0077164">
    <property type="protein sequence ID" value="FBpp0076867"/>
    <property type="gene ID" value="FBgn0035593"/>
</dbReference>
<dbReference type="EnsemblMetazoa" id="FBtr0331804">
    <property type="protein sequence ID" value="FBpp0304189"/>
    <property type="gene ID" value="FBgn0035593"/>
</dbReference>
<dbReference type="GeneID" id="38603"/>
<dbReference type="KEGG" id="dme:Dmel_CG4603"/>
<dbReference type="UCSC" id="CG4603-RA">
    <property type="organism name" value="d. melanogaster"/>
</dbReference>
<dbReference type="AGR" id="FB:FBgn0035593"/>
<dbReference type="CTD" id="55432"/>
<dbReference type="FlyBase" id="FBgn0035593">
    <property type="gene designation" value="Yod1"/>
</dbReference>
<dbReference type="VEuPathDB" id="VectorBase:FBgn0035593"/>
<dbReference type="eggNOG" id="KOG3288">
    <property type="taxonomic scope" value="Eukaryota"/>
</dbReference>
<dbReference type="GeneTree" id="ENSGT00390000009989"/>
<dbReference type="HOGENOM" id="CLU_049327_1_1_1"/>
<dbReference type="InParanoid" id="Q9VRJ9"/>
<dbReference type="OMA" id="TRCILVY"/>
<dbReference type="OrthoDB" id="65596at2759"/>
<dbReference type="PhylomeDB" id="Q9VRJ9"/>
<dbReference type="Reactome" id="R-DME-5689896">
    <property type="pathway name" value="Ovarian tumor domain proteases"/>
</dbReference>
<dbReference type="BioGRID-ORCS" id="38603">
    <property type="hits" value="0 hits in 1 CRISPR screen"/>
</dbReference>
<dbReference type="GenomeRNAi" id="38603"/>
<dbReference type="PRO" id="PR:Q9VRJ9"/>
<dbReference type="Proteomes" id="UP000000803">
    <property type="component" value="Chromosome 3L"/>
</dbReference>
<dbReference type="Bgee" id="FBgn0035593">
    <property type="expression patterns" value="Expressed in mid-late elongation-stage spermatid (Drosophila) in testis and 80 other cell types or tissues"/>
</dbReference>
<dbReference type="ExpressionAtlas" id="Q9VRJ9">
    <property type="expression patterns" value="baseline and differential"/>
</dbReference>
<dbReference type="GO" id="GO:0004843">
    <property type="term" value="F:cysteine-type deubiquitinase activity"/>
    <property type="evidence" value="ECO:0000250"/>
    <property type="project" value="FlyBase"/>
</dbReference>
<dbReference type="GO" id="GO:0008270">
    <property type="term" value="F:zinc ion binding"/>
    <property type="evidence" value="ECO:0007669"/>
    <property type="project" value="UniProtKB-KW"/>
</dbReference>
<dbReference type="GO" id="GO:0030968">
    <property type="term" value="P:endoplasmic reticulum unfolded protein response"/>
    <property type="evidence" value="ECO:0000318"/>
    <property type="project" value="GO_Central"/>
</dbReference>
<dbReference type="GO" id="GO:0036503">
    <property type="term" value="P:ERAD pathway"/>
    <property type="evidence" value="ECO:0000318"/>
    <property type="project" value="GO_Central"/>
</dbReference>
<dbReference type="GO" id="GO:2000781">
    <property type="term" value="P:positive regulation of double-strand break repair"/>
    <property type="evidence" value="ECO:0000315"/>
    <property type="project" value="FlyBase"/>
</dbReference>
<dbReference type="CDD" id="cd22745">
    <property type="entry name" value="OTU_OTU1"/>
    <property type="match status" value="1"/>
</dbReference>
<dbReference type="CDD" id="cd17059">
    <property type="entry name" value="Ubl_OTU1"/>
    <property type="match status" value="1"/>
</dbReference>
<dbReference type="FunFam" id="3.10.20.90:FF:000096">
    <property type="entry name" value="Ubiquitin thioesterase OTU1"/>
    <property type="match status" value="1"/>
</dbReference>
<dbReference type="FunFam" id="3.90.70.80:FF:000006">
    <property type="entry name" value="Ubiquitin thioesterase OTU1"/>
    <property type="match status" value="1"/>
</dbReference>
<dbReference type="Gene3D" id="3.90.70.80">
    <property type="match status" value="1"/>
</dbReference>
<dbReference type="Gene3D" id="3.10.20.90">
    <property type="entry name" value="Phosphatidylinositol 3-kinase Catalytic Subunit, Chain A, domain 1"/>
    <property type="match status" value="1"/>
</dbReference>
<dbReference type="InterPro" id="IPR048857">
    <property type="entry name" value="OTU1_Ubl"/>
</dbReference>
<dbReference type="InterPro" id="IPR003323">
    <property type="entry name" value="OTU_dom"/>
</dbReference>
<dbReference type="InterPro" id="IPR038765">
    <property type="entry name" value="Papain-like_cys_pep_sf"/>
</dbReference>
<dbReference type="InterPro" id="IPR029071">
    <property type="entry name" value="Ubiquitin-like_domsf"/>
</dbReference>
<dbReference type="PANTHER" id="PTHR13312">
    <property type="entry name" value="HIV-INDUCED PROTEIN-7-LIKE PROTEASE"/>
    <property type="match status" value="1"/>
</dbReference>
<dbReference type="PANTHER" id="PTHR13312:SF0">
    <property type="entry name" value="UBIQUITIN THIOESTERASE OTU1"/>
    <property type="match status" value="1"/>
</dbReference>
<dbReference type="Pfam" id="PF02338">
    <property type="entry name" value="OTU"/>
    <property type="match status" value="1"/>
</dbReference>
<dbReference type="Pfam" id="PF21403">
    <property type="entry name" value="OTU1_UBXL"/>
    <property type="match status" value="1"/>
</dbReference>
<dbReference type="Pfam" id="PF24560">
    <property type="entry name" value="zf-C2H2_OTU1_C"/>
    <property type="match status" value="1"/>
</dbReference>
<dbReference type="SUPFAM" id="SSF54001">
    <property type="entry name" value="Cysteine proteinases"/>
    <property type="match status" value="1"/>
</dbReference>
<dbReference type="SUPFAM" id="SSF54236">
    <property type="entry name" value="Ubiquitin-like"/>
    <property type="match status" value="1"/>
</dbReference>
<dbReference type="PROSITE" id="PS50802">
    <property type="entry name" value="OTU"/>
    <property type="match status" value="1"/>
</dbReference>
<dbReference type="PROSITE" id="PS00028">
    <property type="entry name" value="ZINC_FINGER_C2H2_1"/>
    <property type="match status" value="1"/>
</dbReference>
<feature type="chain" id="PRO_0000282362" description="Ubiquitin thioesterase Otu1">
    <location>
        <begin position="1"/>
        <end position="347"/>
    </location>
</feature>
<feature type="domain" description="Ubiquitin-like">
    <location>
        <begin position="5"/>
        <end position="87"/>
    </location>
</feature>
<feature type="domain" description="OTU" evidence="4">
    <location>
        <begin position="150"/>
        <end position="274"/>
    </location>
</feature>
<feature type="zinc finger region" description="C2H2-type">
    <location>
        <begin position="317"/>
        <end position="341"/>
    </location>
</feature>
<feature type="region of interest" description="UBX-like" evidence="2">
    <location>
        <begin position="8"/>
        <end position="89"/>
    </location>
</feature>
<feature type="region of interest" description="Cys-loop" evidence="2">
    <location>
        <begin position="155"/>
        <end position="161"/>
    </location>
</feature>
<feature type="region of interest" description="Variable-loop" evidence="2">
    <location>
        <begin position="213"/>
        <end position="223"/>
    </location>
</feature>
<feature type="region of interest" description="His-loop" evidence="2">
    <location>
        <begin position="263"/>
        <end position="267"/>
    </location>
</feature>
<feature type="region of interest" description="S2 site" evidence="2">
    <location>
        <begin position="290"/>
        <end position="295"/>
    </location>
</feature>
<feature type="active site" evidence="3">
    <location>
        <position position="158"/>
    </location>
</feature>
<feature type="active site" description="Nucleophile" evidence="2">
    <location>
        <position position="161"/>
    </location>
</feature>
<feature type="active site" evidence="2">
    <location>
        <position position="267"/>
    </location>
</feature>
<feature type="active site" evidence="3">
    <location>
        <position position="341"/>
    </location>
</feature>
<feature type="binding site" evidence="2">
    <location>
        <position position="266"/>
    </location>
    <ligand>
        <name>substrate</name>
    </ligand>
</feature>
<feature type="sequence conflict" description="In Ref. 3; AAL39440." evidence="7" ref="3">
    <original>A</original>
    <variation>S</variation>
    <location>
        <position position="87"/>
    </location>
</feature>
<name>OTU1_DROME</name>
<reference key="1">
    <citation type="journal article" date="2000" name="Science">
        <title>The genome sequence of Drosophila melanogaster.</title>
        <authorList>
            <person name="Adams M.D."/>
            <person name="Celniker S.E."/>
            <person name="Holt R.A."/>
            <person name="Evans C.A."/>
            <person name="Gocayne J.D."/>
            <person name="Amanatides P.G."/>
            <person name="Scherer S.E."/>
            <person name="Li P.W."/>
            <person name="Hoskins R.A."/>
            <person name="Galle R.F."/>
            <person name="George R.A."/>
            <person name="Lewis S.E."/>
            <person name="Richards S."/>
            <person name="Ashburner M."/>
            <person name="Henderson S.N."/>
            <person name="Sutton G.G."/>
            <person name="Wortman J.R."/>
            <person name="Yandell M.D."/>
            <person name="Zhang Q."/>
            <person name="Chen L.X."/>
            <person name="Brandon R.C."/>
            <person name="Rogers Y.-H.C."/>
            <person name="Blazej R.G."/>
            <person name="Champe M."/>
            <person name="Pfeiffer B.D."/>
            <person name="Wan K.H."/>
            <person name="Doyle C."/>
            <person name="Baxter E.G."/>
            <person name="Helt G."/>
            <person name="Nelson C.R."/>
            <person name="Miklos G.L.G."/>
            <person name="Abril J.F."/>
            <person name="Agbayani A."/>
            <person name="An H.-J."/>
            <person name="Andrews-Pfannkoch C."/>
            <person name="Baldwin D."/>
            <person name="Ballew R.M."/>
            <person name="Basu A."/>
            <person name="Baxendale J."/>
            <person name="Bayraktaroglu L."/>
            <person name="Beasley E.M."/>
            <person name="Beeson K.Y."/>
            <person name="Benos P.V."/>
            <person name="Berman B.P."/>
            <person name="Bhandari D."/>
            <person name="Bolshakov S."/>
            <person name="Borkova D."/>
            <person name="Botchan M.R."/>
            <person name="Bouck J."/>
            <person name="Brokstein P."/>
            <person name="Brottier P."/>
            <person name="Burtis K.C."/>
            <person name="Busam D.A."/>
            <person name="Butler H."/>
            <person name="Cadieu E."/>
            <person name="Center A."/>
            <person name="Chandra I."/>
            <person name="Cherry J.M."/>
            <person name="Cawley S."/>
            <person name="Dahlke C."/>
            <person name="Davenport L.B."/>
            <person name="Davies P."/>
            <person name="de Pablos B."/>
            <person name="Delcher A."/>
            <person name="Deng Z."/>
            <person name="Mays A.D."/>
            <person name="Dew I."/>
            <person name="Dietz S.M."/>
            <person name="Dodson K."/>
            <person name="Doup L.E."/>
            <person name="Downes M."/>
            <person name="Dugan-Rocha S."/>
            <person name="Dunkov B.C."/>
            <person name="Dunn P."/>
            <person name="Durbin K.J."/>
            <person name="Evangelista C.C."/>
            <person name="Ferraz C."/>
            <person name="Ferriera S."/>
            <person name="Fleischmann W."/>
            <person name="Fosler C."/>
            <person name="Gabrielian A.E."/>
            <person name="Garg N.S."/>
            <person name="Gelbart W.M."/>
            <person name="Glasser K."/>
            <person name="Glodek A."/>
            <person name="Gong F."/>
            <person name="Gorrell J.H."/>
            <person name="Gu Z."/>
            <person name="Guan P."/>
            <person name="Harris M."/>
            <person name="Harris N.L."/>
            <person name="Harvey D.A."/>
            <person name="Heiman T.J."/>
            <person name="Hernandez J.R."/>
            <person name="Houck J."/>
            <person name="Hostin D."/>
            <person name="Houston K.A."/>
            <person name="Howland T.J."/>
            <person name="Wei M.-H."/>
            <person name="Ibegwam C."/>
            <person name="Jalali M."/>
            <person name="Kalush F."/>
            <person name="Karpen G.H."/>
            <person name="Ke Z."/>
            <person name="Kennison J.A."/>
            <person name="Ketchum K.A."/>
            <person name="Kimmel B.E."/>
            <person name="Kodira C.D."/>
            <person name="Kraft C.L."/>
            <person name="Kravitz S."/>
            <person name="Kulp D."/>
            <person name="Lai Z."/>
            <person name="Lasko P."/>
            <person name="Lei Y."/>
            <person name="Levitsky A.A."/>
            <person name="Li J.H."/>
            <person name="Li Z."/>
            <person name="Liang Y."/>
            <person name="Lin X."/>
            <person name="Liu X."/>
            <person name="Mattei B."/>
            <person name="McIntosh T.C."/>
            <person name="McLeod M.P."/>
            <person name="McPherson D."/>
            <person name="Merkulov G."/>
            <person name="Milshina N.V."/>
            <person name="Mobarry C."/>
            <person name="Morris J."/>
            <person name="Moshrefi A."/>
            <person name="Mount S.M."/>
            <person name="Moy M."/>
            <person name="Murphy B."/>
            <person name="Murphy L."/>
            <person name="Muzny D.M."/>
            <person name="Nelson D.L."/>
            <person name="Nelson D.R."/>
            <person name="Nelson K.A."/>
            <person name="Nixon K."/>
            <person name="Nusskern D.R."/>
            <person name="Pacleb J.M."/>
            <person name="Palazzolo M."/>
            <person name="Pittman G.S."/>
            <person name="Pan S."/>
            <person name="Pollard J."/>
            <person name="Puri V."/>
            <person name="Reese M.G."/>
            <person name="Reinert K."/>
            <person name="Remington K."/>
            <person name="Saunders R.D.C."/>
            <person name="Scheeler F."/>
            <person name="Shen H."/>
            <person name="Shue B.C."/>
            <person name="Siden-Kiamos I."/>
            <person name="Simpson M."/>
            <person name="Skupski M.P."/>
            <person name="Smith T.J."/>
            <person name="Spier E."/>
            <person name="Spradling A.C."/>
            <person name="Stapleton M."/>
            <person name="Strong R."/>
            <person name="Sun E."/>
            <person name="Svirskas R."/>
            <person name="Tector C."/>
            <person name="Turner R."/>
            <person name="Venter E."/>
            <person name="Wang A.H."/>
            <person name="Wang X."/>
            <person name="Wang Z.-Y."/>
            <person name="Wassarman D.A."/>
            <person name="Weinstock G.M."/>
            <person name="Weissenbach J."/>
            <person name="Williams S.M."/>
            <person name="Woodage T."/>
            <person name="Worley K.C."/>
            <person name="Wu D."/>
            <person name="Yang S."/>
            <person name="Yao Q.A."/>
            <person name="Ye J."/>
            <person name="Yeh R.-F."/>
            <person name="Zaveri J.S."/>
            <person name="Zhan M."/>
            <person name="Zhang G."/>
            <person name="Zhao Q."/>
            <person name="Zheng L."/>
            <person name="Zheng X.H."/>
            <person name="Zhong F.N."/>
            <person name="Zhong W."/>
            <person name="Zhou X."/>
            <person name="Zhu S.C."/>
            <person name="Zhu X."/>
            <person name="Smith H.O."/>
            <person name="Gibbs R.A."/>
            <person name="Myers E.W."/>
            <person name="Rubin G.M."/>
            <person name="Venter J.C."/>
        </authorList>
    </citation>
    <scope>NUCLEOTIDE SEQUENCE [LARGE SCALE GENOMIC DNA]</scope>
    <source>
        <strain>Berkeley</strain>
    </source>
</reference>
<reference key="2">
    <citation type="journal article" date="2002" name="Genome Biol.">
        <title>Annotation of the Drosophila melanogaster euchromatic genome: a systematic review.</title>
        <authorList>
            <person name="Misra S."/>
            <person name="Crosby M.A."/>
            <person name="Mungall C.J."/>
            <person name="Matthews B.B."/>
            <person name="Campbell K.S."/>
            <person name="Hradecky P."/>
            <person name="Huang Y."/>
            <person name="Kaminker J.S."/>
            <person name="Millburn G.H."/>
            <person name="Prochnik S.E."/>
            <person name="Smith C.D."/>
            <person name="Tupy J.L."/>
            <person name="Whitfield E.J."/>
            <person name="Bayraktaroglu L."/>
            <person name="Berman B.P."/>
            <person name="Bettencourt B.R."/>
            <person name="Celniker S.E."/>
            <person name="de Grey A.D.N.J."/>
            <person name="Drysdale R.A."/>
            <person name="Harris N.L."/>
            <person name="Richter J."/>
            <person name="Russo S."/>
            <person name="Schroeder A.J."/>
            <person name="Shu S.Q."/>
            <person name="Stapleton M."/>
            <person name="Yamada C."/>
            <person name="Ashburner M."/>
            <person name="Gelbart W.M."/>
            <person name="Rubin G.M."/>
            <person name="Lewis S.E."/>
        </authorList>
    </citation>
    <scope>GENOME REANNOTATION</scope>
    <source>
        <strain>Berkeley</strain>
    </source>
</reference>
<reference key="3">
    <citation type="submission" date="2003-01" db="EMBL/GenBank/DDBJ databases">
        <authorList>
            <person name="Stapleton M."/>
            <person name="Brokstein P."/>
            <person name="Hong L."/>
            <person name="Agbayani A."/>
            <person name="Carlson J.W."/>
            <person name="Champe M."/>
            <person name="Chavez C."/>
            <person name="Dorsett V."/>
            <person name="Dresnek D."/>
            <person name="Farfan D."/>
            <person name="Frise E."/>
            <person name="George R.A."/>
            <person name="Gonzalez M."/>
            <person name="Guarin H."/>
            <person name="Kronmiller B."/>
            <person name="Li P.W."/>
            <person name="Liao G."/>
            <person name="Miranda A."/>
            <person name="Mungall C.J."/>
            <person name="Nunoo J."/>
            <person name="Pacleb J.M."/>
            <person name="Paragas V."/>
            <person name="Park S."/>
            <person name="Patel S."/>
            <person name="Phouanenavong S."/>
            <person name="Wan K.H."/>
            <person name="Yu C."/>
            <person name="Lewis S.E."/>
            <person name="Rubin G.M."/>
            <person name="Celniker S.E."/>
        </authorList>
    </citation>
    <scope>NUCLEOTIDE SEQUENCE [LARGE SCALE MRNA]</scope>
    <source>
        <strain>Berkeley</strain>
        <tissue>Ovary</tissue>
    </source>
</reference>
<reference key="4">
    <citation type="journal article" date="2022" name="Sci. Rep.">
        <title>Usp5, Usp34, and Otu1 deubiquitylases mediate DNA repair in Drosophila melanogaster.</title>
        <authorList>
            <person name="Pahi Z.G."/>
            <person name="Kovacs L."/>
            <person name="Szucs D."/>
            <person name="Borsos B.N."/>
            <person name="Deak P."/>
            <person name="Pankotai T."/>
        </authorList>
    </citation>
    <scope>FUNCTION</scope>
    <scope>DISRUPTION PHENOTYPE</scope>
</reference>
<keyword id="KW-0378">Hydrolase</keyword>
<keyword id="KW-0479">Metal-binding</keyword>
<keyword id="KW-0645">Protease</keyword>
<keyword id="KW-1185">Reference proteome</keyword>
<keyword id="KW-0788">Thiol protease</keyword>
<keyword id="KW-0833">Ubl conjugation pathway</keyword>
<keyword id="KW-0862">Zinc</keyword>
<keyword id="KW-0863">Zinc-finger</keyword>
<evidence type="ECO:0000250" key="1">
    <source>
        <dbReference type="UniProtKB" id="P43558"/>
    </source>
</evidence>
<evidence type="ECO:0000250" key="2">
    <source>
        <dbReference type="UniProtKB" id="Q5VVQ6"/>
    </source>
</evidence>
<evidence type="ECO:0000250" key="3">
    <source>
        <dbReference type="UniProtKB" id="Q96FW1"/>
    </source>
</evidence>
<evidence type="ECO:0000255" key="4">
    <source>
        <dbReference type="PROSITE-ProRule" id="PRU00139"/>
    </source>
</evidence>
<evidence type="ECO:0000269" key="5">
    <source>
    </source>
</evidence>
<evidence type="ECO:0000303" key="6">
    <source>
    </source>
</evidence>
<evidence type="ECO:0000305" key="7"/>
<evidence type="ECO:0000305" key="8">
    <source>
    </source>
</evidence>
<evidence type="ECO:0000312" key="9">
    <source>
        <dbReference type="FlyBase" id="FBgn0035593"/>
    </source>
</evidence>